<reference key="1">
    <citation type="journal article" date="1996" name="Nucleic Acids Res.">
        <title>Complete sequence analysis of the genome of the bacterium Mycoplasma pneumoniae.</title>
        <authorList>
            <person name="Himmelreich R."/>
            <person name="Hilbert H."/>
            <person name="Plagens H."/>
            <person name="Pirkl E."/>
            <person name="Li B.-C."/>
            <person name="Herrmann R."/>
        </authorList>
    </citation>
    <scope>NUCLEOTIDE SEQUENCE [LARGE SCALE GENOMIC DNA]</scope>
    <source>
        <strain>ATCC 29342 / M129 / Subtype 1</strain>
    </source>
</reference>
<proteinExistence type="predicted"/>
<gene>
    <name type="ordered locus">MPN_376</name>
    <name type="ORF">A19_orf1140</name>
    <name type="ORF">MP460</name>
</gene>
<evidence type="ECO:0000255" key="1"/>
<evidence type="ECO:0000305" key="2"/>
<protein>
    <recommendedName>
        <fullName>Uncharacterized protein MPN_376</fullName>
    </recommendedName>
</protein>
<feature type="chain" id="PRO_0000210669" description="Uncharacterized protein MPN_376">
    <location>
        <begin position="1"/>
        <end position="1140"/>
    </location>
</feature>
<feature type="transmembrane region" description="Helical" evidence="1">
    <location>
        <begin position="8"/>
        <end position="28"/>
    </location>
</feature>
<feature type="transmembrane region" description="Helical" evidence="1">
    <location>
        <begin position="1098"/>
        <end position="1118"/>
    </location>
</feature>
<accession>P75405</accession>
<name>Y376_MYCPN</name>
<keyword id="KW-1003">Cell membrane</keyword>
<keyword id="KW-0472">Membrane</keyword>
<keyword id="KW-1185">Reference proteome</keyword>
<keyword id="KW-0812">Transmembrane</keyword>
<keyword id="KW-1133">Transmembrane helix</keyword>
<organism>
    <name type="scientific">Mycoplasma pneumoniae (strain ATCC 29342 / M129 / Subtype 1)</name>
    <name type="common">Mycoplasmoides pneumoniae</name>
    <dbReference type="NCBI Taxonomy" id="272634"/>
    <lineage>
        <taxon>Bacteria</taxon>
        <taxon>Bacillati</taxon>
        <taxon>Mycoplasmatota</taxon>
        <taxon>Mycoplasmoidales</taxon>
        <taxon>Mycoplasmoidaceae</taxon>
        <taxon>Mycoplasmoides</taxon>
    </lineage>
</organism>
<sequence length="1140" mass="130384">MKRLQYRFLLFGFALGSFGWFVASSAFTSVVKSNNETLSSDGGVHMRYLKGKGDVLSILKSKSPAITQRFDLKWNNGKKTEVYLNNVNNYISESLYAQEALKQIERTAQLSIQNGELPDVKVYTNSGASFGLVGWHTDNGRTWAFRHENKYDKNVHFSWNQTYYKYSNRERTASNPYYWKWVAWFDLGYANQRIGLVENDEYHIDKRVPEPTPRKWDKNKPLWGDIRSKILYSAERLDPDKGIFIWFNQTGFNTKGTKGWANSGFFTDFWDTNNNPNAFTTNITSEGGNSNWHSPDWGSHTTDTRFFLKLEPYSKLFYKENGQERSITVSDYIRKAKSTKTNYQWVNKNQIKTLVRKTRSIDLGLGSAVRQTYTTKSDIASNQQLKYKLKDSTFSIDTYNNFKLDKLLVPKTNEDATAIKNGVFVKQPTLSFDFNPVLTNAIVNIHNLFAQTLDLKEHLKSDQPYNESDKAAINKVIEQIKNKEVDYIQVADFIGKLKNWSQNPGSIESKGENTAQWYADAKREFGLNLNDDVNTWTQLSSLIASYFSKDIFANVKLNGAKERRMKVWDGAKFEFIPIENTEKQSEQLANENRAEIAVSAIGFQDEGGLRDASFINKVALTPKSSKTKIANGDASKIEKAANEISYKYHYRQNFKQASWDKQNSQTKSIVVQSTDLNDERERFQKDINNYLKVQGISETEIKVNAVHKVDAMLNARKSDDPKLASVQSTANKYGLNLRSNPYTGQFYVVVDVTNANDLGNQRRANNAKSYFYYIEGLDKGAQSSYLVRFENKQKLYSLESLAVDSRGLYVKNVSKDAIIQAKQNQNLYLDTHNWNAALKANLTNAELTLPTASADNSAKLSTPNAENDEGFLSENVSGSILGYVERMTGKKLFLKERVSFNKEDKNNLKLRLTSNFTLDKKGNLEVKDPSVINQIVEEAKGYNVLVSEEKGDDPESDKNIFKITLTTNPEQSTVIKLPYWIVTKKSKTNKDGTVREQKNLVFDFSNLNNFEYNTVVSLLFTDSSFIKNAYAPLQTEFRKQLKTVLEHKYQAPIKTGQLPLLTKVQLANNQKQIDNFTFDLHKNIFNKEDINKINWPLIAITFTGSAALLSTIIASGVVLHRWRKSRKHFWEQMLKARKVK</sequence>
<comment type="subcellular location">
    <subcellularLocation>
        <location evidence="2">Cell membrane</location>
        <topology evidence="2">Multi-pass membrane protein</topology>
    </subcellularLocation>
</comment>
<comment type="similarity">
    <text evidence="2">To M.pneumoniae MPN_375 (in the N-terminal section), M.pneumoniae MPN_374 (in the central section) and M.pneumoniae MPN_373 (in the C-terminal section).</text>
</comment>
<dbReference type="EMBL" id="U00089">
    <property type="protein sequence ID" value="AAB96108.1"/>
    <property type="molecule type" value="Genomic_DNA"/>
</dbReference>
<dbReference type="PIR" id="S73786">
    <property type="entry name" value="S73786"/>
</dbReference>
<dbReference type="RefSeq" id="NP_110064.1">
    <property type="nucleotide sequence ID" value="NC_000912.1"/>
</dbReference>
<dbReference type="SMR" id="P75405"/>
<dbReference type="IntAct" id="P75405">
    <property type="interactions" value="1"/>
</dbReference>
<dbReference type="STRING" id="272634.MPN_376"/>
<dbReference type="EnsemblBacteria" id="AAB96108">
    <property type="protein sequence ID" value="AAB96108"/>
    <property type="gene ID" value="MPN_376"/>
</dbReference>
<dbReference type="KEGG" id="mpn:MPN_376"/>
<dbReference type="PATRIC" id="fig|272634.6.peg.407"/>
<dbReference type="HOGENOM" id="CLU_277842_0_0_14"/>
<dbReference type="BioCyc" id="MPNE272634:G1GJ3-591-MONOMER"/>
<dbReference type="Proteomes" id="UP000000808">
    <property type="component" value="Chromosome"/>
</dbReference>
<dbReference type="GO" id="GO:0005886">
    <property type="term" value="C:plasma membrane"/>
    <property type="evidence" value="ECO:0007669"/>
    <property type="project" value="UniProtKB-SubCell"/>
</dbReference>